<comment type="function">
    <text evidence="1">ATP-binding RNA helicase involved in 40S ribosomal subunit biogenesis and is required for the normal formation of 18S rRNAs through pre-rRNA processing at A0, A1 and A2 sites. Required for vegetative growth (By similarity).</text>
</comment>
<comment type="catalytic activity">
    <reaction>
        <text>ATP + H2O = ADP + phosphate + H(+)</text>
        <dbReference type="Rhea" id="RHEA:13065"/>
        <dbReference type="ChEBI" id="CHEBI:15377"/>
        <dbReference type="ChEBI" id="CHEBI:15378"/>
        <dbReference type="ChEBI" id="CHEBI:30616"/>
        <dbReference type="ChEBI" id="CHEBI:43474"/>
        <dbReference type="ChEBI" id="CHEBI:456216"/>
        <dbReference type="EC" id="3.6.4.13"/>
    </reaction>
</comment>
<comment type="subcellular location">
    <subcellularLocation>
        <location evidence="1">Nucleus</location>
        <location evidence="1">Nucleolus</location>
    </subcellularLocation>
</comment>
<comment type="domain">
    <text>The Q motif is unique to and characteristic of the DEAD box family of RNA helicases and controls ATP binding and hydrolysis.</text>
</comment>
<comment type="similarity">
    <text evidence="5">Belongs to the DEAD box helicase family. DDX49/DBP8 subfamily.</text>
</comment>
<keyword id="KW-0067">ATP-binding</keyword>
<keyword id="KW-0347">Helicase</keyword>
<keyword id="KW-0378">Hydrolase</keyword>
<keyword id="KW-0547">Nucleotide-binding</keyword>
<keyword id="KW-0539">Nucleus</keyword>
<keyword id="KW-1185">Reference proteome</keyword>
<keyword id="KW-0690">Ribosome biogenesis</keyword>
<keyword id="KW-0694">RNA-binding</keyword>
<keyword id="KW-0698">rRNA processing</keyword>
<proteinExistence type="inferred from homology"/>
<dbReference type="EC" id="3.6.4.13"/>
<dbReference type="EMBL" id="DS027690">
    <property type="protein sequence ID" value="EAW21473.1"/>
    <property type="molecule type" value="Genomic_DNA"/>
</dbReference>
<dbReference type="RefSeq" id="XP_001263370.1">
    <property type="nucleotide sequence ID" value="XM_001263369.1"/>
</dbReference>
<dbReference type="SMR" id="A1D6X9"/>
<dbReference type="STRING" id="331117.A1D6X9"/>
<dbReference type="EnsemblFungi" id="EAW21473">
    <property type="protein sequence ID" value="EAW21473"/>
    <property type="gene ID" value="NFIA_066370"/>
</dbReference>
<dbReference type="GeneID" id="4589684"/>
<dbReference type="KEGG" id="nfi:NFIA_066370"/>
<dbReference type="VEuPathDB" id="FungiDB:NFIA_066370"/>
<dbReference type="eggNOG" id="KOG0340">
    <property type="taxonomic scope" value="Eukaryota"/>
</dbReference>
<dbReference type="HOGENOM" id="CLU_003041_1_1_1"/>
<dbReference type="OMA" id="IMIFTDT"/>
<dbReference type="OrthoDB" id="10261904at2759"/>
<dbReference type="Proteomes" id="UP000006702">
    <property type="component" value="Unassembled WGS sequence"/>
</dbReference>
<dbReference type="GO" id="GO:0005829">
    <property type="term" value="C:cytosol"/>
    <property type="evidence" value="ECO:0007669"/>
    <property type="project" value="TreeGrafter"/>
</dbReference>
<dbReference type="GO" id="GO:0005730">
    <property type="term" value="C:nucleolus"/>
    <property type="evidence" value="ECO:0007669"/>
    <property type="project" value="UniProtKB-SubCell"/>
</dbReference>
<dbReference type="GO" id="GO:0005524">
    <property type="term" value="F:ATP binding"/>
    <property type="evidence" value="ECO:0007669"/>
    <property type="project" value="UniProtKB-KW"/>
</dbReference>
<dbReference type="GO" id="GO:0016887">
    <property type="term" value="F:ATP hydrolysis activity"/>
    <property type="evidence" value="ECO:0007669"/>
    <property type="project" value="RHEA"/>
</dbReference>
<dbReference type="GO" id="GO:0003723">
    <property type="term" value="F:RNA binding"/>
    <property type="evidence" value="ECO:0007669"/>
    <property type="project" value="UniProtKB-KW"/>
</dbReference>
<dbReference type="GO" id="GO:0003724">
    <property type="term" value="F:RNA helicase activity"/>
    <property type="evidence" value="ECO:0007669"/>
    <property type="project" value="UniProtKB-EC"/>
</dbReference>
<dbReference type="GO" id="GO:0006364">
    <property type="term" value="P:rRNA processing"/>
    <property type="evidence" value="ECO:0007669"/>
    <property type="project" value="UniProtKB-KW"/>
</dbReference>
<dbReference type="CDD" id="cd17955">
    <property type="entry name" value="DEADc_DDX49"/>
    <property type="match status" value="1"/>
</dbReference>
<dbReference type="CDD" id="cd18787">
    <property type="entry name" value="SF2_C_DEAD"/>
    <property type="match status" value="1"/>
</dbReference>
<dbReference type="Gene3D" id="3.40.50.300">
    <property type="entry name" value="P-loop containing nucleotide triphosphate hydrolases"/>
    <property type="match status" value="2"/>
</dbReference>
<dbReference type="InterPro" id="IPR011545">
    <property type="entry name" value="DEAD/DEAH_box_helicase_dom"/>
</dbReference>
<dbReference type="InterPro" id="IPR050079">
    <property type="entry name" value="DEAD_box_RNA_helicase"/>
</dbReference>
<dbReference type="InterPro" id="IPR014001">
    <property type="entry name" value="Helicase_ATP-bd"/>
</dbReference>
<dbReference type="InterPro" id="IPR001650">
    <property type="entry name" value="Helicase_C-like"/>
</dbReference>
<dbReference type="InterPro" id="IPR027417">
    <property type="entry name" value="P-loop_NTPase"/>
</dbReference>
<dbReference type="InterPro" id="IPR000629">
    <property type="entry name" value="RNA-helicase_DEAD-box_CS"/>
</dbReference>
<dbReference type="InterPro" id="IPR014014">
    <property type="entry name" value="RNA_helicase_DEAD_Q_motif"/>
</dbReference>
<dbReference type="PANTHER" id="PTHR47959:SF24">
    <property type="entry name" value="ATP-DEPENDENT RNA HELICASE"/>
    <property type="match status" value="1"/>
</dbReference>
<dbReference type="PANTHER" id="PTHR47959">
    <property type="entry name" value="ATP-DEPENDENT RNA HELICASE RHLE-RELATED"/>
    <property type="match status" value="1"/>
</dbReference>
<dbReference type="Pfam" id="PF00270">
    <property type="entry name" value="DEAD"/>
    <property type="match status" value="1"/>
</dbReference>
<dbReference type="Pfam" id="PF00271">
    <property type="entry name" value="Helicase_C"/>
    <property type="match status" value="1"/>
</dbReference>
<dbReference type="SMART" id="SM00487">
    <property type="entry name" value="DEXDc"/>
    <property type="match status" value="1"/>
</dbReference>
<dbReference type="SMART" id="SM00490">
    <property type="entry name" value="HELICc"/>
    <property type="match status" value="1"/>
</dbReference>
<dbReference type="SUPFAM" id="SSF52540">
    <property type="entry name" value="P-loop containing nucleoside triphosphate hydrolases"/>
    <property type="match status" value="1"/>
</dbReference>
<dbReference type="PROSITE" id="PS00039">
    <property type="entry name" value="DEAD_ATP_HELICASE"/>
    <property type="match status" value="1"/>
</dbReference>
<dbReference type="PROSITE" id="PS51192">
    <property type="entry name" value="HELICASE_ATP_BIND_1"/>
    <property type="match status" value="1"/>
</dbReference>
<dbReference type="PROSITE" id="PS51194">
    <property type="entry name" value="HELICASE_CTER"/>
    <property type="match status" value="1"/>
</dbReference>
<dbReference type="PROSITE" id="PS51195">
    <property type="entry name" value="Q_MOTIF"/>
    <property type="match status" value="1"/>
</dbReference>
<accession>A1D6X9</accession>
<gene>
    <name type="primary">dbp8</name>
    <name type="ORF">NFIA_066370</name>
</gene>
<name>DBP8_NEOFI</name>
<evidence type="ECO:0000250" key="1"/>
<evidence type="ECO:0000255" key="2">
    <source>
        <dbReference type="PROSITE-ProRule" id="PRU00541"/>
    </source>
</evidence>
<evidence type="ECO:0000255" key="3">
    <source>
        <dbReference type="PROSITE-ProRule" id="PRU00542"/>
    </source>
</evidence>
<evidence type="ECO:0000256" key="4">
    <source>
        <dbReference type="SAM" id="MobiDB-lite"/>
    </source>
</evidence>
<evidence type="ECO:0000305" key="5"/>
<organism>
    <name type="scientific">Neosartorya fischeri (strain ATCC 1020 / DSM 3700 / CBS 544.65 / FGSC A1164 / JCM 1740 / NRRL 181 / WB 181)</name>
    <name type="common">Aspergillus fischerianus</name>
    <dbReference type="NCBI Taxonomy" id="331117"/>
    <lineage>
        <taxon>Eukaryota</taxon>
        <taxon>Fungi</taxon>
        <taxon>Dikarya</taxon>
        <taxon>Ascomycota</taxon>
        <taxon>Pezizomycotina</taxon>
        <taxon>Eurotiomycetes</taxon>
        <taxon>Eurotiomycetidae</taxon>
        <taxon>Eurotiales</taxon>
        <taxon>Aspergillaceae</taxon>
        <taxon>Aspergillus</taxon>
        <taxon>Aspergillus subgen. Fumigati</taxon>
    </lineage>
</organism>
<protein>
    <recommendedName>
        <fullName>ATP-dependent RNA helicase dbp8</fullName>
        <ecNumber>3.6.4.13</ecNumber>
    </recommendedName>
</protein>
<sequence>MASPVPSEPVSEDTHDSSSGSEVEQSEISTRAPKRRRLSESSDDSDDSYVAPAPLPTLSRIKKKGAPDAKPAAPAGQDNPVLIRDALEIGLREEASSFAALNVAPWLVGSLTTMAVRKPTAIQKACIPEILKGRDCIGGSRTGSGKTIAFSVPMLQKWAEDPFGIFGVVLTPTRELALQIFEQIKAISAPQSMKPVLITGGTDMRPQAIALAGRPHVVIATPGRLADHIKSSGEDTVCGLKRVRMVVLDEADRLLASGPGSMLPDVETCLSALPPSSERQTLLFTATVTPEVRALKNMPRSANKPPVFVTEISTENQGSIPPTLKQTYLKVPLTHREAFLHVLLSTEDNASRPAIIFCNHTKTADLLERMLRRLTHRVTSLHSLLPQSERNANLARFRASAARILVATDVASRGLDIPTVSLVINYDVPRNPDDYVHRVGRTARAGRSGEAITLVGQRDVQLVLAIEERVGRQMEEWSEEGVSIEGRLVRTGVLKEVGEAKREAMGEIDEGRDVLGRKRNKLKKVR</sequence>
<feature type="chain" id="PRO_0000281712" description="ATP-dependent RNA helicase dbp8">
    <location>
        <begin position="1"/>
        <end position="526"/>
    </location>
</feature>
<feature type="domain" description="Helicase ATP-binding" evidence="2">
    <location>
        <begin position="127"/>
        <end position="306"/>
    </location>
</feature>
<feature type="domain" description="Helicase C-terminal" evidence="3">
    <location>
        <begin position="338"/>
        <end position="485"/>
    </location>
</feature>
<feature type="region of interest" description="Disordered" evidence="4">
    <location>
        <begin position="1"/>
        <end position="77"/>
    </location>
</feature>
<feature type="short sequence motif" description="Q motif">
    <location>
        <begin position="96"/>
        <end position="124"/>
    </location>
</feature>
<feature type="short sequence motif" description="DEAD box">
    <location>
        <begin position="249"/>
        <end position="252"/>
    </location>
</feature>
<feature type="compositionally biased region" description="Polar residues" evidence="4">
    <location>
        <begin position="17"/>
        <end position="29"/>
    </location>
</feature>
<feature type="binding site" evidence="2">
    <location>
        <begin position="140"/>
        <end position="147"/>
    </location>
    <ligand>
        <name>ATP</name>
        <dbReference type="ChEBI" id="CHEBI:30616"/>
    </ligand>
</feature>
<reference key="1">
    <citation type="journal article" date="2008" name="PLoS Genet.">
        <title>Genomic islands in the pathogenic filamentous fungus Aspergillus fumigatus.</title>
        <authorList>
            <person name="Fedorova N.D."/>
            <person name="Khaldi N."/>
            <person name="Joardar V.S."/>
            <person name="Maiti R."/>
            <person name="Amedeo P."/>
            <person name="Anderson M.J."/>
            <person name="Crabtree J."/>
            <person name="Silva J.C."/>
            <person name="Badger J.H."/>
            <person name="Albarraq A."/>
            <person name="Angiuoli S."/>
            <person name="Bussey H."/>
            <person name="Bowyer P."/>
            <person name="Cotty P.J."/>
            <person name="Dyer P.S."/>
            <person name="Egan A."/>
            <person name="Galens K."/>
            <person name="Fraser-Liggett C.M."/>
            <person name="Haas B.J."/>
            <person name="Inman J.M."/>
            <person name="Kent R."/>
            <person name="Lemieux S."/>
            <person name="Malavazi I."/>
            <person name="Orvis J."/>
            <person name="Roemer T."/>
            <person name="Ronning C.M."/>
            <person name="Sundaram J.P."/>
            <person name="Sutton G."/>
            <person name="Turner G."/>
            <person name="Venter J.C."/>
            <person name="White O.R."/>
            <person name="Whitty B.R."/>
            <person name="Youngman P."/>
            <person name="Wolfe K.H."/>
            <person name="Goldman G.H."/>
            <person name="Wortman J.R."/>
            <person name="Jiang B."/>
            <person name="Denning D.W."/>
            <person name="Nierman W.C."/>
        </authorList>
    </citation>
    <scope>NUCLEOTIDE SEQUENCE [LARGE SCALE GENOMIC DNA]</scope>
    <source>
        <strain>ATCC 1020 / DSM 3700 / CBS 544.65 / FGSC A1164 / JCM 1740 / NRRL 181 / WB 181</strain>
    </source>
</reference>